<reference key="1">
    <citation type="journal article" date="1992" name="Mech. Dev.">
        <title>Molecular cloning, expression and in vitro functional characterization of Myb-related proteins in Xenopus.</title>
        <authorList>
            <person name="Bouwmeester T."/>
            <person name="Guehmann S."/>
            <person name="El-Baradi T."/>
            <person name="Kalkbrenner F."/>
            <person name="van Wijk I."/>
            <person name="Moelling K."/>
            <person name="Pieler T."/>
        </authorList>
    </citation>
    <scope>NUCLEOTIDE SEQUENCE [MRNA]</scope>
</reference>
<reference key="2">
    <citation type="journal article" date="1999" name="J. Biol. Chem.">
        <title>Regulation of DNA binding activity and nuclear transport of B-Myb in Xenopus oocytes.</title>
        <authorList>
            <person name="Humbert-Lan G."/>
            <person name="Pieler T."/>
        </authorList>
    </citation>
    <scope>SEQUENCE REVISION TO C-TERMINUS</scope>
</reference>
<organism>
    <name type="scientific">Xenopus laevis</name>
    <name type="common">African clawed frog</name>
    <dbReference type="NCBI Taxonomy" id="8355"/>
    <lineage>
        <taxon>Eukaryota</taxon>
        <taxon>Metazoa</taxon>
        <taxon>Chordata</taxon>
        <taxon>Craniata</taxon>
        <taxon>Vertebrata</taxon>
        <taxon>Euteleostomi</taxon>
        <taxon>Amphibia</taxon>
        <taxon>Batrachia</taxon>
        <taxon>Anura</taxon>
        <taxon>Pipoidea</taxon>
        <taxon>Pipidae</taxon>
        <taxon>Xenopodinae</taxon>
        <taxon>Xenopus</taxon>
        <taxon>Xenopus</taxon>
    </lineage>
</organism>
<gene>
    <name type="primary">mybl2</name>
    <name type="synonym">bmyb</name>
    <name type="synonym">myb1</name>
</gene>
<protein>
    <recommendedName>
        <fullName>Myb-related protein B</fullName>
        <shortName>B-Myb</shortName>
    </recommendedName>
    <alternativeName>
        <fullName>Myb-like protein 2</fullName>
    </alternativeName>
    <alternativeName>
        <fullName>Myb-related protein 1</fullName>
    </alternativeName>
    <alternativeName>
        <fullName>XMYB1</fullName>
    </alternativeName>
</protein>
<accession>P52551</accession>
<keyword id="KW-0238">DNA-binding</keyword>
<keyword id="KW-0539">Nucleus</keyword>
<keyword id="KW-1185">Reference proteome</keyword>
<keyword id="KW-0677">Repeat</keyword>
<keyword id="KW-0804">Transcription</keyword>
<keyword id="KW-0805">Transcription regulation</keyword>
<feature type="chain" id="PRO_0000197061" description="Myb-related protein B">
    <location>
        <begin position="1"/>
        <end position="743"/>
    </location>
</feature>
<feature type="domain" description="HTH myb-type 1" evidence="2">
    <location>
        <begin position="26"/>
        <end position="77"/>
    </location>
</feature>
<feature type="domain" description="HTH myb-type 2" evidence="2">
    <location>
        <begin position="78"/>
        <end position="133"/>
    </location>
</feature>
<feature type="domain" description="HTH myb-type 3" evidence="2">
    <location>
        <begin position="134"/>
        <end position="184"/>
    </location>
</feature>
<feature type="DNA-binding region" description="H-T-H motif" evidence="2">
    <location>
        <begin position="54"/>
        <end position="77"/>
    </location>
</feature>
<feature type="DNA-binding region" description="H-T-H motif" evidence="2">
    <location>
        <begin position="106"/>
        <end position="129"/>
    </location>
</feature>
<feature type="DNA-binding region" description="H-T-H motif" evidence="2">
    <location>
        <begin position="157"/>
        <end position="180"/>
    </location>
</feature>
<feature type="region of interest" description="Disordered" evidence="3">
    <location>
        <begin position="1"/>
        <end position="29"/>
    </location>
</feature>
<feature type="region of interest" description="Disordered" evidence="3">
    <location>
        <begin position="221"/>
        <end position="262"/>
    </location>
</feature>
<feature type="region of interest" description="Disordered" evidence="3">
    <location>
        <begin position="381"/>
        <end position="406"/>
    </location>
</feature>
<feature type="compositionally biased region" description="Acidic residues" evidence="3">
    <location>
        <begin position="9"/>
        <end position="22"/>
    </location>
</feature>
<proteinExistence type="evidence at transcript level"/>
<sequence>MSRRSRGDDLEDLQYQDTDSDVPEPKENRVKVKWTPEEDETLKALVKKHGQGEWKTIASNLNNRTEQQCQHRWLRVLHPDLVKGPWTKEEDEKVIELVKKYGTKHWTLIAKQLRGRMGKQCRERWHNHLNPEVKKSSWTEEEDRIICQAHKVLGNRWAEIAKLLPGRTDNAVKNHWNSTIKRKVETGGFLTVKASGQQEEREDSGYQAAEDQNHVLLSEPVERSANIPEEPSNILSPKLLTKSPGIRSEQESGGEGSNSESATAIVDSAPEKWMVEYVNFLVPGSDIMESDPEAWCELSSFDLGEDSTVSDVGSPTHAAVTDKPQASNVTEYRLDGHTLSDLCKGNKGELIPISPQPQTAFGTPPSVLKQHKKRKITLSPVTENGGSITTSVTEANSMTPKSTPVKSLPFSPSQFLNFWSKQDALELENPSLTSTPVCSQKTMVTTPLHRDKTPLLQKNSVFITPNNKFAADHVLHTPTPFKNALEKFGSLKPLPPTPHLEEDLKEVLRSESGIELIIVDEPKLERQKRKPHSPMKKVRKSLALDIIDKHPKPSSLTLPSAVSAHMQPQTCDSFLSVSLNESSCSREENSVLNQGFVQVKTSKGAVVQLGNTSQLLTDIGELVKTQCSLRNTETATPFKTENGTFTNTDLCPQSLMDLDTFHSTAVASNKCPTIKTETLFQVKPEKTKMQRHNIMNIPEPMTAAWKTVAFGGSQDQMLMQEKARAILNLTYKHSSTSRALVLS</sequence>
<comment type="subunit">
    <text evidence="1">Component of the DREAM complex.</text>
</comment>
<comment type="subcellular location">
    <subcellularLocation>
        <location>Nucleus</location>
    </subcellularLocation>
</comment>
<comment type="developmental stage">
    <text>Present throughout oogenesis and early Xenopus embryogenesis; in adult tissue it is primarily detected in blood.</text>
</comment>
<name>MYBB_XENLA</name>
<dbReference type="EMBL" id="M75870">
    <property type="protein sequence ID" value="AAC98701.1"/>
    <property type="molecule type" value="mRNA"/>
</dbReference>
<dbReference type="SMR" id="P52551"/>
<dbReference type="AGR" id="Xenbase:XB-GENE-982423"/>
<dbReference type="Xenbase" id="XB-GENE-982423">
    <property type="gene designation" value="mybl2.S"/>
</dbReference>
<dbReference type="Proteomes" id="UP000186698">
    <property type="component" value="Unplaced"/>
</dbReference>
<dbReference type="GO" id="GO:0005634">
    <property type="term" value="C:nucleus"/>
    <property type="evidence" value="ECO:0000318"/>
    <property type="project" value="GO_Central"/>
</dbReference>
<dbReference type="GO" id="GO:0000981">
    <property type="term" value="F:DNA-binding transcription factor activity, RNA polymerase II-specific"/>
    <property type="evidence" value="ECO:0000318"/>
    <property type="project" value="GO_Central"/>
</dbReference>
<dbReference type="GO" id="GO:0000978">
    <property type="term" value="F:RNA polymerase II cis-regulatory region sequence-specific DNA binding"/>
    <property type="evidence" value="ECO:0000318"/>
    <property type="project" value="GO_Central"/>
</dbReference>
<dbReference type="GO" id="GO:0000278">
    <property type="term" value="P:mitotic cell cycle"/>
    <property type="evidence" value="ECO:0000318"/>
    <property type="project" value="GO_Central"/>
</dbReference>
<dbReference type="GO" id="GO:0045944">
    <property type="term" value="P:positive regulation of transcription by RNA polymerase II"/>
    <property type="evidence" value="ECO:0000318"/>
    <property type="project" value="GO_Central"/>
</dbReference>
<dbReference type="CDD" id="cd00167">
    <property type="entry name" value="SANT"/>
    <property type="match status" value="3"/>
</dbReference>
<dbReference type="FunFam" id="1.10.10.60:FF:000010">
    <property type="entry name" value="Transcriptional activator Myb isoform A"/>
    <property type="match status" value="1"/>
</dbReference>
<dbReference type="FunFam" id="1.10.10.60:FF:000016">
    <property type="entry name" value="Transcriptional activator Myb isoform A"/>
    <property type="match status" value="1"/>
</dbReference>
<dbReference type="Gene3D" id="1.10.10.60">
    <property type="entry name" value="Homeodomain-like"/>
    <property type="match status" value="3"/>
</dbReference>
<dbReference type="InterPro" id="IPR015395">
    <property type="entry name" value="C-myb_C"/>
</dbReference>
<dbReference type="InterPro" id="IPR009057">
    <property type="entry name" value="Homeodomain-like_sf"/>
</dbReference>
<dbReference type="InterPro" id="IPR017930">
    <property type="entry name" value="Myb_dom"/>
</dbReference>
<dbReference type="InterPro" id="IPR050560">
    <property type="entry name" value="MYB_TF"/>
</dbReference>
<dbReference type="InterPro" id="IPR001005">
    <property type="entry name" value="SANT/Myb"/>
</dbReference>
<dbReference type="PANTHER" id="PTHR45614">
    <property type="entry name" value="MYB PROTEIN-RELATED"/>
    <property type="match status" value="1"/>
</dbReference>
<dbReference type="PANTHER" id="PTHR45614:SF51">
    <property type="entry name" value="MYB-LIKE DNA-BINDING PROTEIN BAS1"/>
    <property type="match status" value="1"/>
</dbReference>
<dbReference type="Pfam" id="PF09316">
    <property type="entry name" value="Cmyb_C"/>
    <property type="match status" value="1"/>
</dbReference>
<dbReference type="Pfam" id="PF13921">
    <property type="entry name" value="Myb_DNA-bind_6"/>
    <property type="match status" value="1"/>
</dbReference>
<dbReference type="Pfam" id="PF00249">
    <property type="entry name" value="Myb_DNA-binding"/>
    <property type="match status" value="1"/>
</dbReference>
<dbReference type="SMART" id="SM00717">
    <property type="entry name" value="SANT"/>
    <property type="match status" value="3"/>
</dbReference>
<dbReference type="SUPFAM" id="SSF46689">
    <property type="entry name" value="Homeodomain-like"/>
    <property type="match status" value="2"/>
</dbReference>
<dbReference type="PROSITE" id="PS51294">
    <property type="entry name" value="HTH_MYB"/>
    <property type="match status" value="3"/>
</dbReference>
<evidence type="ECO:0000250" key="1"/>
<evidence type="ECO:0000255" key="2">
    <source>
        <dbReference type="PROSITE-ProRule" id="PRU00625"/>
    </source>
</evidence>
<evidence type="ECO:0000256" key="3">
    <source>
        <dbReference type="SAM" id="MobiDB-lite"/>
    </source>
</evidence>